<protein>
    <recommendedName>
        <fullName>Melanocyte-stimulating hormone receptor</fullName>
        <shortName>MSH-R</shortName>
    </recommendedName>
    <alternativeName>
        <fullName>Melanocortin receptor 1</fullName>
        <shortName>MC1-R</shortName>
    </alternativeName>
</protein>
<evidence type="ECO:0000250" key="1">
    <source>
        <dbReference type="UniProtKB" id="Q01726"/>
    </source>
</evidence>
<evidence type="ECO:0000255" key="2"/>
<evidence type="ECO:0000255" key="3">
    <source>
        <dbReference type="PROSITE-ProRule" id="PRU00521"/>
    </source>
</evidence>
<evidence type="ECO:0000256" key="4">
    <source>
        <dbReference type="SAM" id="MobiDB-lite"/>
    </source>
</evidence>
<evidence type="ECO:0000269" key="5">
    <source>
    </source>
</evidence>
<evidence type="ECO:0000305" key="6">
    <source>
    </source>
</evidence>
<accession>Q0Q460</accession>
<proteinExistence type="inferred from homology"/>
<name>MSHR_MAMPR</name>
<dbReference type="EMBL" id="DQ648860">
    <property type="protein sequence ID" value="ABG37012.1"/>
    <property type="molecule type" value="Genomic_DNA"/>
</dbReference>
<dbReference type="SMR" id="Q0Q460"/>
<dbReference type="GlyCosmos" id="Q0Q460">
    <property type="glycosylation" value="1 site, No reported glycans"/>
</dbReference>
<dbReference type="GO" id="GO:0005886">
    <property type="term" value="C:plasma membrane"/>
    <property type="evidence" value="ECO:0000250"/>
    <property type="project" value="UniProtKB"/>
</dbReference>
<dbReference type="GO" id="GO:0004980">
    <property type="term" value="F:melanocyte-stimulating hormone receptor activity"/>
    <property type="evidence" value="ECO:0007669"/>
    <property type="project" value="InterPro"/>
</dbReference>
<dbReference type="CDD" id="cd15351">
    <property type="entry name" value="7tmA_MC1R"/>
    <property type="match status" value="1"/>
</dbReference>
<dbReference type="FunFam" id="1.20.1070.10:FF:000211">
    <property type="entry name" value="Melanocyte-stimulating hormone receptor"/>
    <property type="match status" value="1"/>
</dbReference>
<dbReference type="Gene3D" id="1.20.1070.10">
    <property type="entry name" value="Rhodopsin 7-helix transmembrane proteins"/>
    <property type="match status" value="1"/>
</dbReference>
<dbReference type="InterPro" id="IPR000276">
    <property type="entry name" value="GPCR_Rhodpsn"/>
</dbReference>
<dbReference type="InterPro" id="IPR017452">
    <property type="entry name" value="GPCR_Rhodpsn_7TM"/>
</dbReference>
<dbReference type="InterPro" id="IPR001671">
    <property type="entry name" value="Melcrt_ACTH_rcpt"/>
</dbReference>
<dbReference type="InterPro" id="IPR000761">
    <property type="entry name" value="MSH_rcpt"/>
</dbReference>
<dbReference type="PANTHER" id="PTHR22750">
    <property type="entry name" value="G-PROTEIN COUPLED RECEPTOR"/>
    <property type="match status" value="1"/>
</dbReference>
<dbReference type="Pfam" id="PF00001">
    <property type="entry name" value="7tm_1"/>
    <property type="match status" value="1"/>
</dbReference>
<dbReference type="PRINTS" id="PR00237">
    <property type="entry name" value="GPCRRHODOPSN"/>
</dbReference>
<dbReference type="PRINTS" id="PR00534">
    <property type="entry name" value="MCRFAMILY"/>
</dbReference>
<dbReference type="PRINTS" id="PR00536">
    <property type="entry name" value="MELNOCYTESHR"/>
</dbReference>
<dbReference type="SMART" id="SM01381">
    <property type="entry name" value="7TM_GPCR_Srsx"/>
    <property type="match status" value="1"/>
</dbReference>
<dbReference type="SUPFAM" id="SSF81321">
    <property type="entry name" value="Family A G protein-coupled receptor-like"/>
    <property type="match status" value="1"/>
</dbReference>
<dbReference type="PROSITE" id="PS00237">
    <property type="entry name" value="G_PROTEIN_RECEP_F1_1"/>
    <property type="match status" value="1"/>
</dbReference>
<dbReference type="PROSITE" id="PS50262">
    <property type="entry name" value="G_PROTEIN_RECEP_F1_2"/>
    <property type="match status" value="1"/>
</dbReference>
<sequence>MPMQGAQGRLRGSLNATPPTTPHSGLAGNQTGPWCLEVSIPDELFLSLGLVSLVENMLVVAAIAKNRNLHSPMYYFICCLAVSDLLVSVSNVLETAVMLLLEAGVLAAWAGVVQQLDNAIDVFICGSMVSSLCFLGAIAVDRYITIFYALRYHSIVTLPRARWAIATIWAASVVCSTLFIAYYDCTAVLLCLVSFFLALVVLMAVLYMHMLARACLHARSIARLHKRWRPVHQGLGLKGAATLSILLGSFFLCWGPFFLHLTLIVLCPQHPTCSCVFKNFKLFLTLIICNSIVDPLIYAFRSQELRKTLKEVLLCSW</sequence>
<organism>
    <name type="scientific">Mammuthus primigenius</name>
    <name type="common">Siberian woolly mammoth</name>
    <dbReference type="NCBI Taxonomy" id="37349"/>
    <lineage>
        <taxon>Eukaryota</taxon>
        <taxon>Metazoa</taxon>
        <taxon>Chordata</taxon>
        <taxon>Craniata</taxon>
        <taxon>Vertebrata</taxon>
        <taxon>Euteleostomi</taxon>
        <taxon>Mammalia</taxon>
        <taxon>Eutheria</taxon>
        <taxon>Afrotheria</taxon>
        <taxon>Proboscidea</taxon>
        <taxon>Elephantidae</taxon>
        <taxon>Mammuthus</taxon>
    </lineage>
</organism>
<gene>
    <name type="primary">MC1R</name>
</gene>
<feature type="chain" id="PRO_0000286434" description="Melanocyte-stimulating hormone receptor">
    <location>
        <begin position="1"/>
        <end position="317"/>
    </location>
</feature>
<feature type="topological domain" description="Extracellular" evidence="2">
    <location>
        <begin position="1"/>
        <end position="37"/>
    </location>
</feature>
<feature type="transmembrane region" description="Helical; Name=1" evidence="2">
    <location>
        <begin position="38"/>
        <end position="63"/>
    </location>
</feature>
<feature type="topological domain" description="Cytoplasmic" evidence="2">
    <location>
        <begin position="64"/>
        <end position="72"/>
    </location>
</feature>
<feature type="transmembrane region" description="Helical; Name=2" evidence="2">
    <location>
        <begin position="73"/>
        <end position="93"/>
    </location>
</feature>
<feature type="topological domain" description="Extracellular" evidence="2">
    <location>
        <begin position="94"/>
        <end position="118"/>
    </location>
</feature>
<feature type="transmembrane region" description="Helical; Name=3" evidence="2">
    <location>
        <begin position="119"/>
        <end position="140"/>
    </location>
</feature>
<feature type="topological domain" description="Cytoplasmic" evidence="2">
    <location>
        <begin position="141"/>
        <end position="163"/>
    </location>
</feature>
<feature type="transmembrane region" description="Helical; Name=4" evidence="2">
    <location>
        <begin position="164"/>
        <end position="183"/>
    </location>
</feature>
<feature type="topological domain" description="Extracellular" evidence="2">
    <location>
        <begin position="184"/>
        <end position="191"/>
    </location>
</feature>
<feature type="transmembrane region" description="Helical; Name=5" evidence="2">
    <location>
        <begin position="192"/>
        <end position="211"/>
    </location>
</feature>
<feature type="topological domain" description="Cytoplasmic" evidence="2">
    <location>
        <begin position="212"/>
        <end position="240"/>
    </location>
</feature>
<feature type="transmembrane region" description="Helical; Name=6" evidence="2">
    <location>
        <begin position="241"/>
        <end position="266"/>
    </location>
</feature>
<feature type="topological domain" description="Extracellular" evidence="2">
    <location>
        <begin position="267"/>
        <end position="279"/>
    </location>
</feature>
<feature type="transmembrane region" description="Helical; Name=7" evidence="2">
    <location>
        <begin position="280"/>
        <end position="300"/>
    </location>
</feature>
<feature type="topological domain" description="Cytoplasmic" evidence="2">
    <location>
        <begin position="301"/>
        <end position="317"/>
    </location>
</feature>
<feature type="region of interest" description="Disordered" evidence="4">
    <location>
        <begin position="1"/>
        <end position="28"/>
    </location>
</feature>
<feature type="lipid moiety-binding region" description="S-palmitoyl cysteine" evidence="2">
    <location>
        <position position="315"/>
    </location>
</feature>
<feature type="glycosylation site" description="N-linked (GlcNAc...) asparagine" evidence="2">
    <location>
        <position position="29"/>
    </location>
</feature>
<feature type="sequence variant" description="In allele 2." evidence="5">
    <original>T</original>
    <variation>A</variation>
    <location>
        <position position="21"/>
    </location>
</feature>
<feature type="sequence variant" description="In allele 2." evidence="5">
    <original>R</original>
    <variation>C</variation>
    <location>
        <position position="67"/>
    </location>
</feature>
<feature type="sequence variant" description="In allele 2." evidence="5">
    <original>R</original>
    <variation>S</variation>
    <location>
        <position position="301"/>
    </location>
</feature>
<keyword id="KW-1003">Cell membrane</keyword>
<keyword id="KW-0952">Extinct organism protein</keyword>
<keyword id="KW-0297">G-protein coupled receptor</keyword>
<keyword id="KW-0325">Glycoprotein</keyword>
<keyword id="KW-0449">Lipoprotein</keyword>
<keyword id="KW-0472">Membrane</keyword>
<keyword id="KW-0564">Palmitate</keyword>
<keyword id="KW-0675">Receptor</keyword>
<keyword id="KW-0807">Transducer</keyword>
<keyword id="KW-0812">Transmembrane</keyword>
<keyword id="KW-1133">Transmembrane helix</keyword>
<comment type="function">
    <text evidence="1">Receptor for MSH (alpha, beta and gamma) and ACTH. The activity of this receptor is mediated by G proteins which activate adenylate cyclase. Mediates melanogenesis, the production of eumelanin (black/brown) and phaeomelanin (red/yellow), via regulation of cAMP signaling in melanocytes.</text>
</comment>
<comment type="subunit">
    <text evidence="1">Interacts with MGRN1, but does not undergo MGRN1-mediated ubiquitination; this interaction competes with GNAS-binding and thus inhibits agonist-induced cAMP production. Interacts with OPN3; the interaction results in a decrease in MC1R-mediated cAMP signaling and ultimately a decrease in melanin production in melanocytes.</text>
</comment>
<comment type="subcellular location">
    <subcellularLocation>
        <location evidence="1">Cell membrane</location>
        <topology evidence="2">Multi-pass membrane protein</topology>
    </subcellularLocation>
</comment>
<comment type="polymorphism">
    <text evidence="6">Allele 2 is much less active than allele 1 and would have probably resulted in mammoths with a substantially lighter hair color.</text>
</comment>
<comment type="similarity">
    <text evidence="3">Belongs to the G-protein coupled receptor 1 family.</text>
</comment>
<reference key="1">
    <citation type="journal article" date="2006" name="Science">
        <title>Nuclear gene indicates coat-color polymorphism in mammoths.</title>
        <authorList>
            <person name="Roempler H."/>
            <person name="Rohland N."/>
            <person name="Lalueza-Fox C."/>
            <person name="Willerslev E."/>
            <person name="Kuznetsova T."/>
            <person name="Rabeder G."/>
            <person name="Bertranpetit J."/>
            <person name="Schoeneberg T."/>
            <person name="Hofreiter M."/>
        </authorList>
    </citation>
    <scope>NUCLEOTIDE SEQUENCE [GENOMIC DNA]</scope>
    <scope>VARIANTS ALA-21; CYS-67 AND SER-301</scope>
</reference>